<reference key="1">
    <citation type="journal article" date="2002" name="Proc. Natl. Acad. Sci. U.S.A.">
        <title>The complete genome sequence of Chlorobium tepidum TLS, a photosynthetic, anaerobic, green-sulfur bacterium.</title>
        <authorList>
            <person name="Eisen J.A."/>
            <person name="Nelson K.E."/>
            <person name="Paulsen I.T."/>
            <person name="Heidelberg J.F."/>
            <person name="Wu M."/>
            <person name="Dodson R.J."/>
            <person name="DeBoy R.T."/>
            <person name="Gwinn M.L."/>
            <person name="Nelson W.C."/>
            <person name="Haft D.H."/>
            <person name="Hickey E.K."/>
            <person name="Peterson J.D."/>
            <person name="Durkin A.S."/>
            <person name="Kolonay J.F."/>
            <person name="Yang F."/>
            <person name="Holt I.E."/>
            <person name="Umayam L.A."/>
            <person name="Mason T.M."/>
            <person name="Brenner M."/>
            <person name="Shea T.P."/>
            <person name="Parksey D.S."/>
            <person name="Nierman W.C."/>
            <person name="Feldblyum T.V."/>
            <person name="Hansen C.L."/>
            <person name="Craven M.B."/>
            <person name="Radune D."/>
            <person name="Vamathevan J.J."/>
            <person name="Khouri H.M."/>
            <person name="White O."/>
            <person name="Gruber T.M."/>
            <person name="Ketchum K.A."/>
            <person name="Venter J.C."/>
            <person name="Tettelin H."/>
            <person name="Bryant D.A."/>
            <person name="Fraser C.M."/>
        </authorList>
    </citation>
    <scope>NUCLEOTIDE SEQUENCE [LARGE SCALE GENOMIC DNA]</scope>
    <source>
        <strain>ATCC 49652 / DSM 12025 / NBRC 103806 / TLS</strain>
    </source>
</reference>
<accession>Q8KDS1</accession>
<feature type="chain" id="PRO_0000123010" description="dTTP/UTP pyrophosphatase">
    <location>
        <begin position="1"/>
        <end position="197"/>
    </location>
</feature>
<feature type="active site" description="Proton acceptor" evidence="1">
    <location>
        <position position="76"/>
    </location>
</feature>
<feature type="site" description="Important for substrate specificity" evidence="1">
    <location>
        <position position="15"/>
    </location>
</feature>
<feature type="site" description="Important for substrate specificity" evidence="1">
    <location>
        <position position="77"/>
    </location>
</feature>
<feature type="site" description="Important for substrate specificity" evidence="1">
    <location>
        <position position="159"/>
    </location>
</feature>
<organism>
    <name type="scientific">Chlorobaculum tepidum (strain ATCC 49652 / DSM 12025 / NBRC 103806 / TLS)</name>
    <name type="common">Chlorobium tepidum</name>
    <dbReference type="NCBI Taxonomy" id="194439"/>
    <lineage>
        <taxon>Bacteria</taxon>
        <taxon>Pseudomonadati</taxon>
        <taxon>Chlorobiota</taxon>
        <taxon>Chlorobiia</taxon>
        <taxon>Chlorobiales</taxon>
        <taxon>Chlorobiaceae</taxon>
        <taxon>Chlorobaculum</taxon>
    </lineage>
</organism>
<sequence>MTSHRKLILASQSPRRRELLAMTGIPFETASVEIDETFDPVLTAEENVMEISKQKAEAVLRSISADEACAVVLGSDTTVVLDGKPLGKPGDFDHAFDMLSTLQGRSHEVLTGFCILHNGKAITDYARTIVEIGPMTPREITRYIEVMKPFDKAGSYGIQDPLLACFVTGIDGCYYNVVGLPVSKVYAALKPLFPAEG</sequence>
<comment type="function">
    <text evidence="1">Nucleoside triphosphate pyrophosphatase that hydrolyzes dTTP and UTP. May have a dual role in cell division arrest and in preventing the incorporation of modified nucleotides into cellular nucleic acids.</text>
</comment>
<comment type="catalytic activity">
    <reaction evidence="1">
        <text>dTTP + H2O = dTMP + diphosphate + H(+)</text>
        <dbReference type="Rhea" id="RHEA:28534"/>
        <dbReference type="ChEBI" id="CHEBI:15377"/>
        <dbReference type="ChEBI" id="CHEBI:15378"/>
        <dbReference type="ChEBI" id="CHEBI:33019"/>
        <dbReference type="ChEBI" id="CHEBI:37568"/>
        <dbReference type="ChEBI" id="CHEBI:63528"/>
        <dbReference type="EC" id="3.6.1.9"/>
    </reaction>
</comment>
<comment type="catalytic activity">
    <reaction evidence="1">
        <text>UTP + H2O = UMP + diphosphate + H(+)</text>
        <dbReference type="Rhea" id="RHEA:29395"/>
        <dbReference type="ChEBI" id="CHEBI:15377"/>
        <dbReference type="ChEBI" id="CHEBI:15378"/>
        <dbReference type="ChEBI" id="CHEBI:33019"/>
        <dbReference type="ChEBI" id="CHEBI:46398"/>
        <dbReference type="ChEBI" id="CHEBI:57865"/>
        <dbReference type="EC" id="3.6.1.9"/>
    </reaction>
</comment>
<comment type="cofactor">
    <cofactor evidence="1">
        <name>a divalent metal cation</name>
        <dbReference type="ChEBI" id="CHEBI:60240"/>
    </cofactor>
</comment>
<comment type="subcellular location">
    <subcellularLocation>
        <location evidence="1">Cytoplasm</location>
    </subcellularLocation>
</comment>
<comment type="similarity">
    <text evidence="1">Belongs to the Maf family. YhdE subfamily.</text>
</comment>
<name>NTPPA_CHLTE</name>
<gene>
    <name type="primary">maf</name>
    <name type="ordered locus">CT0974</name>
</gene>
<dbReference type="EC" id="3.6.1.9" evidence="1"/>
<dbReference type="EMBL" id="AE006470">
    <property type="protein sequence ID" value="AAM72209.1"/>
    <property type="molecule type" value="Genomic_DNA"/>
</dbReference>
<dbReference type="RefSeq" id="NP_661867.1">
    <property type="nucleotide sequence ID" value="NC_002932.3"/>
</dbReference>
<dbReference type="RefSeq" id="WP_010932654.1">
    <property type="nucleotide sequence ID" value="NC_002932.3"/>
</dbReference>
<dbReference type="SMR" id="Q8KDS1"/>
<dbReference type="STRING" id="194439.CT0974"/>
<dbReference type="EnsemblBacteria" id="AAM72209">
    <property type="protein sequence ID" value="AAM72209"/>
    <property type="gene ID" value="CT0974"/>
</dbReference>
<dbReference type="KEGG" id="cte:CT0974"/>
<dbReference type="PATRIC" id="fig|194439.7.peg.884"/>
<dbReference type="eggNOG" id="COG0424">
    <property type="taxonomic scope" value="Bacteria"/>
</dbReference>
<dbReference type="HOGENOM" id="CLU_040416_0_0_10"/>
<dbReference type="OrthoDB" id="9807767at2"/>
<dbReference type="Proteomes" id="UP000001007">
    <property type="component" value="Chromosome"/>
</dbReference>
<dbReference type="GO" id="GO:0005737">
    <property type="term" value="C:cytoplasm"/>
    <property type="evidence" value="ECO:0007669"/>
    <property type="project" value="UniProtKB-SubCell"/>
</dbReference>
<dbReference type="GO" id="GO:0036218">
    <property type="term" value="F:dTTP diphosphatase activity"/>
    <property type="evidence" value="ECO:0007669"/>
    <property type="project" value="RHEA"/>
</dbReference>
<dbReference type="GO" id="GO:0036221">
    <property type="term" value="F:UTP diphosphatase activity"/>
    <property type="evidence" value="ECO:0007669"/>
    <property type="project" value="RHEA"/>
</dbReference>
<dbReference type="GO" id="GO:0009117">
    <property type="term" value="P:nucleotide metabolic process"/>
    <property type="evidence" value="ECO:0007669"/>
    <property type="project" value="UniProtKB-KW"/>
</dbReference>
<dbReference type="CDD" id="cd00555">
    <property type="entry name" value="Maf"/>
    <property type="match status" value="1"/>
</dbReference>
<dbReference type="Gene3D" id="3.90.950.10">
    <property type="match status" value="1"/>
</dbReference>
<dbReference type="HAMAP" id="MF_00528">
    <property type="entry name" value="Maf"/>
    <property type="match status" value="1"/>
</dbReference>
<dbReference type="InterPro" id="IPR029001">
    <property type="entry name" value="ITPase-like_fam"/>
</dbReference>
<dbReference type="InterPro" id="IPR003697">
    <property type="entry name" value="Maf-like"/>
</dbReference>
<dbReference type="NCBIfam" id="TIGR00172">
    <property type="entry name" value="maf"/>
    <property type="match status" value="1"/>
</dbReference>
<dbReference type="PANTHER" id="PTHR43213">
    <property type="entry name" value="BIFUNCTIONAL DTTP/UTP PYROPHOSPHATASE/METHYLTRANSFERASE PROTEIN-RELATED"/>
    <property type="match status" value="1"/>
</dbReference>
<dbReference type="PANTHER" id="PTHR43213:SF5">
    <property type="entry name" value="BIFUNCTIONAL DTTP_UTP PYROPHOSPHATASE_METHYLTRANSFERASE PROTEIN-RELATED"/>
    <property type="match status" value="1"/>
</dbReference>
<dbReference type="Pfam" id="PF02545">
    <property type="entry name" value="Maf"/>
    <property type="match status" value="1"/>
</dbReference>
<dbReference type="PIRSF" id="PIRSF006305">
    <property type="entry name" value="Maf"/>
    <property type="match status" value="1"/>
</dbReference>
<dbReference type="SUPFAM" id="SSF52972">
    <property type="entry name" value="ITPase-like"/>
    <property type="match status" value="1"/>
</dbReference>
<proteinExistence type="inferred from homology"/>
<protein>
    <recommendedName>
        <fullName evidence="1">dTTP/UTP pyrophosphatase</fullName>
        <shortName evidence="1">dTTPase/UTPase</shortName>
        <ecNumber evidence="1">3.6.1.9</ecNumber>
    </recommendedName>
    <alternativeName>
        <fullName evidence="1">Nucleoside triphosphate pyrophosphatase</fullName>
    </alternativeName>
    <alternativeName>
        <fullName evidence="1">Nucleotide pyrophosphatase</fullName>
        <shortName evidence="1">Nucleotide PPase</shortName>
    </alternativeName>
</protein>
<evidence type="ECO:0000255" key="1">
    <source>
        <dbReference type="HAMAP-Rule" id="MF_00528"/>
    </source>
</evidence>
<keyword id="KW-0963">Cytoplasm</keyword>
<keyword id="KW-0378">Hydrolase</keyword>
<keyword id="KW-0546">Nucleotide metabolism</keyword>
<keyword id="KW-1185">Reference proteome</keyword>